<proteinExistence type="inferred from homology"/>
<organism>
    <name type="scientific">Arabidopsis thaliana</name>
    <name type="common">Mouse-ear cress</name>
    <dbReference type="NCBI Taxonomy" id="3702"/>
    <lineage>
        <taxon>Eukaryota</taxon>
        <taxon>Viridiplantae</taxon>
        <taxon>Streptophyta</taxon>
        <taxon>Embryophyta</taxon>
        <taxon>Tracheophyta</taxon>
        <taxon>Spermatophyta</taxon>
        <taxon>Magnoliopsida</taxon>
        <taxon>eudicotyledons</taxon>
        <taxon>Gunneridae</taxon>
        <taxon>Pentapetalae</taxon>
        <taxon>rosids</taxon>
        <taxon>malvids</taxon>
        <taxon>Brassicales</taxon>
        <taxon>Brassicaceae</taxon>
        <taxon>Camelineae</taxon>
        <taxon>Arabidopsis</taxon>
    </lineage>
</organism>
<keyword id="KW-1015">Disulfide bond</keyword>
<keyword id="KW-0372">Hormone</keyword>
<keyword id="KW-1185">Reference proteome</keyword>
<keyword id="KW-0964">Secreted</keyword>
<keyword id="KW-0732">Signal</keyword>
<accession>Q9MA62</accession>
<gene>
    <name type="primary">RALFL22</name>
    <name type="ordered locus">At3g05490</name>
    <name type="ORF">F22F7.6</name>
</gene>
<protein>
    <recommendedName>
        <fullName>Protein RALF-like 22</fullName>
    </recommendedName>
</protein>
<reference key="1">
    <citation type="journal article" date="2000" name="Nature">
        <title>Sequence and analysis of chromosome 3 of the plant Arabidopsis thaliana.</title>
        <authorList>
            <person name="Salanoubat M."/>
            <person name="Lemcke K."/>
            <person name="Rieger M."/>
            <person name="Ansorge W."/>
            <person name="Unseld M."/>
            <person name="Fartmann B."/>
            <person name="Valle G."/>
            <person name="Bloecker H."/>
            <person name="Perez-Alonso M."/>
            <person name="Obermaier B."/>
            <person name="Delseny M."/>
            <person name="Boutry M."/>
            <person name="Grivell L.A."/>
            <person name="Mache R."/>
            <person name="Puigdomenech P."/>
            <person name="De Simone V."/>
            <person name="Choisne N."/>
            <person name="Artiguenave F."/>
            <person name="Robert C."/>
            <person name="Brottier P."/>
            <person name="Wincker P."/>
            <person name="Cattolico L."/>
            <person name="Weissenbach J."/>
            <person name="Saurin W."/>
            <person name="Quetier F."/>
            <person name="Schaefer M."/>
            <person name="Mueller-Auer S."/>
            <person name="Gabel C."/>
            <person name="Fuchs M."/>
            <person name="Benes V."/>
            <person name="Wurmbach E."/>
            <person name="Drzonek H."/>
            <person name="Erfle H."/>
            <person name="Jordan N."/>
            <person name="Bangert S."/>
            <person name="Wiedelmann R."/>
            <person name="Kranz H."/>
            <person name="Voss H."/>
            <person name="Holland R."/>
            <person name="Brandt P."/>
            <person name="Nyakatura G."/>
            <person name="Vezzi A."/>
            <person name="D'Angelo M."/>
            <person name="Pallavicini A."/>
            <person name="Toppo S."/>
            <person name="Simionati B."/>
            <person name="Conrad A."/>
            <person name="Hornischer K."/>
            <person name="Kauer G."/>
            <person name="Loehnert T.-H."/>
            <person name="Nordsiek G."/>
            <person name="Reichelt J."/>
            <person name="Scharfe M."/>
            <person name="Schoen O."/>
            <person name="Bargues M."/>
            <person name="Terol J."/>
            <person name="Climent J."/>
            <person name="Navarro P."/>
            <person name="Collado C."/>
            <person name="Perez-Perez A."/>
            <person name="Ottenwaelder B."/>
            <person name="Duchemin D."/>
            <person name="Cooke R."/>
            <person name="Laudie M."/>
            <person name="Berger-Llauro C."/>
            <person name="Purnelle B."/>
            <person name="Masuy D."/>
            <person name="de Haan M."/>
            <person name="Maarse A.C."/>
            <person name="Alcaraz J.-P."/>
            <person name="Cottet A."/>
            <person name="Casacuberta E."/>
            <person name="Monfort A."/>
            <person name="Argiriou A."/>
            <person name="Flores M."/>
            <person name="Liguori R."/>
            <person name="Vitale D."/>
            <person name="Mannhaupt G."/>
            <person name="Haase D."/>
            <person name="Schoof H."/>
            <person name="Rudd S."/>
            <person name="Zaccaria P."/>
            <person name="Mewes H.-W."/>
            <person name="Mayer K.F.X."/>
            <person name="Kaul S."/>
            <person name="Town C.D."/>
            <person name="Koo H.L."/>
            <person name="Tallon L.J."/>
            <person name="Jenkins J."/>
            <person name="Rooney T."/>
            <person name="Rizzo M."/>
            <person name="Walts A."/>
            <person name="Utterback T."/>
            <person name="Fujii C.Y."/>
            <person name="Shea T.P."/>
            <person name="Creasy T.H."/>
            <person name="Haas B."/>
            <person name="Maiti R."/>
            <person name="Wu D."/>
            <person name="Peterson J."/>
            <person name="Van Aken S."/>
            <person name="Pai G."/>
            <person name="Militscher J."/>
            <person name="Sellers P."/>
            <person name="Gill J.E."/>
            <person name="Feldblyum T.V."/>
            <person name="Preuss D."/>
            <person name="Lin X."/>
            <person name="Nierman W.C."/>
            <person name="Salzberg S.L."/>
            <person name="White O."/>
            <person name="Venter J.C."/>
            <person name="Fraser C.M."/>
            <person name="Kaneko T."/>
            <person name="Nakamura Y."/>
            <person name="Sato S."/>
            <person name="Kato T."/>
            <person name="Asamizu E."/>
            <person name="Sasamoto S."/>
            <person name="Kimura T."/>
            <person name="Idesawa K."/>
            <person name="Kawashima K."/>
            <person name="Kishida Y."/>
            <person name="Kiyokawa C."/>
            <person name="Kohara M."/>
            <person name="Matsumoto M."/>
            <person name="Matsuno A."/>
            <person name="Muraki A."/>
            <person name="Nakayama S."/>
            <person name="Nakazaki N."/>
            <person name="Shinpo S."/>
            <person name="Takeuchi C."/>
            <person name="Wada T."/>
            <person name="Watanabe A."/>
            <person name="Yamada M."/>
            <person name="Yasuda M."/>
            <person name="Tabata S."/>
        </authorList>
    </citation>
    <scope>NUCLEOTIDE SEQUENCE [LARGE SCALE GENOMIC DNA]</scope>
    <source>
        <strain>cv. Columbia</strain>
    </source>
</reference>
<reference key="2">
    <citation type="journal article" date="2017" name="Plant J.">
        <title>Araport11: a complete reannotation of the Arabidopsis thaliana reference genome.</title>
        <authorList>
            <person name="Cheng C.Y."/>
            <person name="Krishnakumar V."/>
            <person name="Chan A.P."/>
            <person name="Thibaud-Nissen F."/>
            <person name="Schobel S."/>
            <person name="Town C.D."/>
        </authorList>
    </citation>
    <scope>GENOME REANNOTATION</scope>
    <source>
        <strain>cv. Columbia</strain>
    </source>
</reference>
<reference key="3">
    <citation type="journal article" date="2003" name="Science">
        <title>Empirical analysis of transcriptional activity in the Arabidopsis genome.</title>
        <authorList>
            <person name="Yamada K."/>
            <person name="Lim J."/>
            <person name="Dale J.M."/>
            <person name="Chen H."/>
            <person name="Shinn P."/>
            <person name="Palm C.J."/>
            <person name="Southwick A.M."/>
            <person name="Wu H.C."/>
            <person name="Kim C.J."/>
            <person name="Nguyen M."/>
            <person name="Pham P.K."/>
            <person name="Cheuk R.F."/>
            <person name="Karlin-Newmann G."/>
            <person name="Liu S.X."/>
            <person name="Lam B."/>
            <person name="Sakano H."/>
            <person name="Wu T."/>
            <person name="Yu G."/>
            <person name="Miranda M."/>
            <person name="Quach H.L."/>
            <person name="Tripp M."/>
            <person name="Chang C.H."/>
            <person name="Lee J.M."/>
            <person name="Toriumi M.J."/>
            <person name="Chan M.M."/>
            <person name="Tang C.C."/>
            <person name="Onodera C.S."/>
            <person name="Deng J.M."/>
            <person name="Akiyama K."/>
            <person name="Ansari Y."/>
            <person name="Arakawa T."/>
            <person name="Banh J."/>
            <person name="Banno F."/>
            <person name="Bowser L."/>
            <person name="Brooks S.Y."/>
            <person name="Carninci P."/>
            <person name="Chao Q."/>
            <person name="Choy N."/>
            <person name="Enju A."/>
            <person name="Goldsmith A.D."/>
            <person name="Gurjal M."/>
            <person name="Hansen N.F."/>
            <person name="Hayashizaki Y."/>
            <person name="Johnson-Hopson C."/>
            <person name="Hsuan V.W."/>
            <person name="Iida K."/>
            <person name="Karnes M."/>
            <person name="Khan S."/>
            <person name="Koesema E."/>
            <person name="Ishida J."/>
            <person name="Jiang P.X."/>
            <person name="Jones T."/>
            <person name="Kawai J."/>
            <person name="Kamiya A."/>
            <person name="Meyers C."/>
            <person name="Nakajima M."/>
            <person name="Narusaka M."/>
            <person name="Seki M."/>
            <person name="Sakurai T."/>
            <person name="Satou M."/>
            <person name="Tamse R."/>
            <person name="Vaysberg M."/>
            <person name="Wallender E.K."/>
            <person name="Wong C."/>
            <person name="Yamamura Y."/>
            <person name="Yuan S."/>
            <person name="Shinozaki K."/>
            <person name="Davis R.W."/>
            <person name="Theologis A."/>
            <person name="Ecker J.R."/>
        </authorList>
    </citation>
    <scope>NUCLEOTIDE SEQUENCE [LARGE SCALE MRNA]</scope>
    <source>
        <strain>cv. Columbia</strain>
    </source>
</reference>
<reference key="4">
    <citation type="submission" date="2006-02" db="EMBL/GenBank/DDBJ databases">
        <title>Arabidopsis ORF clones.</title>
        <authorList>
            <person name="Shinn P."/>
            <person name="Chen H."/>
            <person name="Kim C.J."/>
            <person name="Ecker J.R."/>
        </authorList>
    </citation>
    <scope>NUCLEOTIDE SEQUENCE [LARGE SCALE MRNA]</scope>
    <source>
        <strain>cv. Columbia</strain>
    </source>
</reference>
<reference key="5">
    <citation type="submission" date="2002-03" db="EMBL/GenBank/DDBJ databases">
        <title>Full-length cDNA from Arabidopsis thaliana.</title>
        <authorList>
            <person name="Brover V.V."/>
            <person name="Troukhan M.E."/>
            <person name="Alexandrov N.A."/>
            <person name="Lu Y.-P."/>
            <person name="Flavell R.B."/>
            <person name="Feldmann K.A."/>
        </authorList>
    </citation>
    <scope>NUCLEOTIDE SEQUENCE [LARGE SCALE MRNA]</scope>
</reference>
<reference key="6">
    <citation type="journal article" date="2002" name="In Silico Biol.">
        <title>Peptomics, identification of novel cationic Arabidopsis peptides with conserved sequence motifs.</title>
        <authorList>
            <person name="Olsen A.N."/>
            <person name="Mundy J."/>
            <person name="Skriver K."/>
        </authorList>
    </citation>
    <scope>GENE FAMILY</scope>
    <scope>NOMENCLATURE</scope>
</reference>
<name>RLF22_ARATH</name>
<dbReference type="EMBL" id="AC009606">
    <property type="protein sequence ID" value="AAF64534.1"/>
    <property type="molecule type" value="Genomic_DNA"/>
</dbReference>
<dbReference type="EMBL" id="CP002686">
    <property type="protein sequence ID" value="AEE74248.1"/>
    <property type="molecule type" value="Genomic_DNA"/>
</dbReference>
<dbReference type="EMBL" id="BT002767">
    <property type="protein sequence ID" value="AAO22595.1"/>
    <property type="molecule type" value="mRNA"/>
</dbReference>
<dbReference type="EMBL" id="BT024562">
    <property type="protein sequence ID" value="ABD38901.1"/>
    <property type="molecule type" value="mRNA"/>
</dbReference>
<dbReference type="EMBL" id="AY088700">
    <property type="protein sequence ID" value="AAM67020.1"/>
    <property type="molecule type" value="mRNA"/>
</dbReference>
<dbReference type="RefSeq" id="NP_001319480.1">
    <property type="nucleotide sequence ID" value="NM_001337587.1"/>
</dbReference>
<dbReference type="SMR" id="Q9MA62"/>
<dbReference type="FunCoup" id="Q9MA62">
    <property type="interactions" value="88"/>
</dbReference>
<dbReference type="STRING" id="3702.Q9MA62"/>
<dbReference type="PaxDb" id="3702-AT3G05490.1"/>
<dbReference type="ProteomicsDB" id="228091"/>
<dbReference type="EnsemblPlants" id="AT3G05490.1">
    <property type="protein sequence ID" value="AT3G05490.1"/>
    <property type="gene ID" value="AT3G05490"/>
</dbReference>
<dbReference type="GeneID" id="28718845"/>
<dbReference type="Gramene" id="AT3G05490.1">
    <property type="protein sequence ID" value="AT3G05490.1"/>
    <property type="gene ID" value="AT3G05490"/>
</dbReference>
<dbReference type="KEGG" id="ath:AT3G05490"/>
<dbReference type="Araport" id="AT3G05490"/>
<dbReference type="TAIR" id="AT3G05490">
    <property type="gene designation" value="RALFL22"/>
</dbReference>
<dbReference type="eggNOG" id="ENOG502S1TF">
    <property type="taxonomic scope" value="Eukaryota"/>
</dbReference>
<dbReference type="HOGENOM" id="CLU_127895_1_2_1"/>
<dbReference type="InParanoid" id="Q9MA62"/>
<dbReference type="OMA" id="GDHHYHN"/>
<dbReference type="OrthoDB" id="1613518at2759"/>
<dbReference type="PhylomeDB" id="Q9MA62"/>
<dbReference type="PRO" id="PR:Q9MA62"/>
<dbReference type="Proteomes" id="UP000006548">
    <property type="component" value="Chromosome 3"/>
</dbReference>
<dbReference type="ExpressionAtlas" id="Q9MA62">
    <property type="expression patterns" value="baseline and differential"/>
</dbReference>
<dbReference type="GO" id="GO:0048046">
    <property type="term" value="C:apoplast"/>
    <property type="evidence" value="ECO:0000250"/>
    <property type="project" value="TAIR"/>
</dbReference>
<dbReference type="GO" id="GO:0009506">
    <property type="term" value="C:plasmodesma"/>
    <property type="evidence" value="ECO:0007005"/>
    <property type="project" value="TAIR"/>
</dbReference>
<dbReference type="GO" id="GO:0005179">
    <property type="term" value="F:hormone activity"/>
    <property type="evidence" value="ECO:0000250"/>
    <property type="project" value="UniProtKB"/>
</dbReference>
<dbReference type="GO" id="GO:0019722">
    <property type="term" value="P:calcium-mediated signaling"/>
    <property type="evidence" value="ECO:0000250"/>
    <property type="project" value="UniProtKB"/>
</dbReference>
<dbReference type="GO" id="GO:0007267">
    <property type="term" value="P:cell-cell signaling"/>
    <property type="evidence" value="ECO:0000250"/>
    <property type="project" value="TAIR"/>
</dbReference>
<dbReference type="GO" id="GO:0040008">
    <property type="term" value="P:regulation of growth"/>
    <property type="evidence" value="ECO:0007669"/>
    <property type="project" value="UniProtKB-ARBA"/>
</dbReference>
<dbReference type="InterPro" id="IPR008801">
    <property type="entry name" value="RALF"/>
</dbReference>
<dbReference type="PANTHER" id="PTHR33136:SF113">
    <property type="entry name" value="PROTEIN RALF-LIKE 22"/>
    <property type="match status" value="1"/>
</dbReference>
<dbReference type="PANTHER" id="PTHR33136">
    <property type="entry name" value="RAPID ALKALINIZATION FACTOR-LIKE"/>
    <property type="match status" value="1"/>
</dbReference>
<dbReference type="Pfam" id="PF05498">
    <property type="entry name" value="RALF"/>
    <property type="match status" value="1"/>
</dbReference>
<comment type="function">
    <text evidence="1">Cell signaling peptide that may regulate plant stress, growth, and development. Mediates a rapid alkalinization of extracellular space by mediating a transient increase in the cytoplasmic Ca(2+) concentration leading to a calcium-dependent signaling events through a cell surface receptor and a concomitant activation of some intracellular mitogen-activated protein kinases (By similarity).</text>
</comment>
<comment type="subcellular location">
    <subcellularLocation>
        <location evidence="1">Secreted</location>
    </subcellularLocation>
</comment>
<comment type="PTM">
    <text evidence="1">Proteolytically cleaved, probably by S1P, a subtilisin-like serine protease (subtilase).</text>
</comment>
<comment type="similarity">
    <text evidence="3">Belongs to the plant rapid alkalinization factor (RALF) family.</text>
</comment>
<feature type="signal peptide" evidence="2">
    <location>
        <begin position="1"/>
        <end position="23"/>
    </location>
</feature>
<feature type="propeptide" id="PRO_0000420316" description="Removed in mature form" evidence="1">
    <location>
        <begin position="24"/>
        <end position="70"/>
    </location>
</feature>
<feature type="chain" id="PRO_0000420317" description="Protein RALF-like 22">
    <location>
        <begin position="71"/>
        <end position="119"/>
    </location>
</feature>
<feature type="site" description="Required for proteolytic cleavage" evidence="1">
    <location>
        <begin position="67"/>
        <end position="68"/>
    </location>
</feature>
<feature type="disulfide bond" evidence="1">
    <location>
        <begin position="88"/>
        <end position="98"/>
    </location>
</feature>
<feature type="disulfide bond" evidence="1">
    <location>
        <begin position="111"/>
        <end position="117"/>
    </location>
</feature>
<sequence>MTNTRAIYAVIAILAIVISAVESTGDFGDSLDFVRAGSSSLFSGCTGSIAECIAEEEEMEFDSDISRRILAQKKYISYGAMRRNSVPCSRRGASYYNCQRGAQANPYSRGCSTITRCRR</sequence>
<evidence type="ECO:0000250" key="1"/>
<evidence type="ECO:0000255" key="2"/>
<evidence type="ECO:0000305" key="3"/>